<dbReference type="EMBL" id="CM001219">
    <property type="protein sequence ID" value="KEH34625.1"/>
    <property type="status" value="ALT_INIT"/>
    <property type="molecule type" value="Genomic_DNA"/>
</dbReference>
<dbReference type="EMBL" id="PSQE01000003">
    <property type="protein sequence ID" value="RHN68173.1"/>
    <property type="molecule type" value="Genomic_DNA"/>
</dbReference>
<dbReference type="RefSeq" id="XP_013460591.1">
    <property type="nucleotide sequence ID" value="XM_013605137.1"/>
</dbReference>
<dbReference type="SMR" id="A0A396IUP1"/>
<dbReference type="STRING" id="3880.A0A072V8V6"/>
<dbReference type="EnsemblPlants" id="rna16486">
    <property type="protein sequence ID" value="RHN68173.1"/>
    <property type="gene ID" value="gene16486"/>
</dbReference>
<dbReference type="GeneID" id="25489240"/>
<dbReference type="Gramene" id="rna16486">
    <property type="protein sequence ID" value="RHN68173.1"/>
    <property type="gene ID" value="gene16486"/>
</dbReference>
<dbReference type="KEGG" id="mtr:25489240"/>
<dbReference type="HOGENOM" id="CLU_011924_4_0_1"/>
<dbReference type="OrthoDB" id="761920at2759"/>
<dbReference type="Proteomes" id="UP000002051">
    <property type="component" value="Chromosome 3"/>
</dbReference>
<dbReference type="Proteomes" id="UP000265566">
    <property type="component" value="Chromosome 3"/>
</dbReference>
<dbReference type="GO" id="GO:0005634">
    <property type="term" value="C:nucleus"/>
    <property type="evidence" value="ECO:0000314"/>
    <property type="project" value="UniProtKB"/>
</dbReference>
<dbReference type="GO" id="GO:0003700">
    <property type="term" value="F:DNA-binding transcription factor activity"/>
    <property type="evidence" value="ECO:0000318"/>
    <property type="project" value="GO_Central"/>
</dbReference>
<dbReference type="GO" id="GO:0043565">
    <property type="term" value="F:sequence-specific DNA binding"/>
    <property type="evidence" value="ECO:0000318"/>
    <property type="project" value="GO_Central"/>
</dbReference>
<dbReference type="GO" id="GO:0036377">
    <property type="term" value="P:arbuscular mycorrhizal association"/>
    <property type="evidence" value="ECO:0000315"/>
    <property type="project" value="UniProtKB"/>
</dbReference>
<dbReference type="GO" id="GO:0016036">
    <property type="term" value="P:cellular response to phosphate starvation"/>
    <property type="evidence" value="ECO:0000270"/>
    <property type="project" value="UniProtKB"/>
</dbReference>
<dbReference type="GO" id="GO:0009740">
    <property type="term" value="P:gibberellic acid mediated signaling pathway"/>
    <property type="evidence" value="ECO:0000315"/>
    <property type="project" value="UniProtKB"/>
</dbReference>
<dbReference type="GO" id="GO:0042538">
    <property type="term" value="P:hyperosmotic salinity response"/>
    <property type="evidence" value="ECO:0000318"/>
    <property type="project" value="GO_Central"/>
</dbReference>
<dbReference type="GO" id="GO:0009867">
    <property type="term" value="P:jasmonic acid mediated signaling pathway"/>
    <property type="evidence" value="ECO:0000318"/>
    <property type="project" value="GO_Central"/>
</dbReference>
<dbReference type="GO" id="GO:0009938">
    <property type="term" value="P:negative regulation of gibberellic acid mediated signaling pathway"/>
    <property type="evidence" value="ECO:0000318"/>
    <property type="project" value="GO_Central"/>
</dbReference>
<dbReference type="GO" id="GO:0010187">
    <property type="term" value="P:negative regulation of seed germination"/>
    <property type="evidence" value="ECO:0000318"/>
    <property type="project" value="GO_Central"/>
</dbReference>
<dbReference type="GO" id="GO:0045944">
    <property type="term" value="P:positive regulation of transcription by RNA polymerase II"/>
    <property type="evidence" value="ECO:0000315"/>
    <property type="project" value="UniProtKB"/>
</dbReference>
<dbReference type="GO" id="GO:0006355">
    <property type="term" value="P:regulation of DNA-templated transcription"/>
    <property type="evidence" value="ECO:0000318"/>
    <property type="project" value="GO_Central"/>
</dbReference>
<dbReference type="GO" id="GO:2000377">
    <property type="term" value="P:regulation of reactive oxygen species metabolic process"/>
    <property type="evidence" value="ECO:0000318"/>
    <property type="project" value="GO_Central"/>
</dbReference>
<dbReference type="GO" id="GO:2000033">
    <property type="term" value="P:regulation of seed dormancy process"/>
    <property type="evidence" value="ECO:0000318"/>
    <property type="project" value="GO_Central"/>
</dbReference>
<dbReference type="GO" id="GO:0006357">
    <property type="term" value="P:regulation of transcription by RNA polymerase II"/>
    <property type="evidence" value="ECO:0000315"/>
    <property type="project" value="UniProtKB"/>
</dbReference>
<dbReference type="GO" id="GO:0009737">
    <property type="term" value="P:response to abscisic acid"/>
    <property type="evidence" value="ECO:0000318"/>
    <property type="project" value="GO_Central"/>
</dbReference>
<dbReference type="GO" id="GO:0009723">
    <property type="term" value="P:response to ethylene"/>
    <property type="evidence" value="ECO:0000318"/>
    <property type="project" value="GO_Central"/>
</dbReference>
<dbReference type="GO" id="GO:0009610">
    <property type="term" value="P:response to symbiotic fungus"/>
    <property type="evidence" value="ECO:0000270"/>
    <property type="project" value="UniProtKB"/>
</dbReference>
<dbReference type="GO" id="GO:0009863">
    <property type="term" value="P:salicylic acid mediated signaling pathway"/>
    <property type="evidence" value="ECO:0000318"/>
    <property type="project" value="GO_Central"/>
</dbReference>
<dbReference type="FunFam" id="1.10.10.1290:FF:000001">
    <property type="entry name" value="DELLA protein GAI"/>
    <property type="match status" value="1"/>
</dbReference>
<dbReference type="Gene3D" id="1.10.10.1290">
    <property type="entry name" value="Transcriptional regulator DELLA, N-terminal domain"/>
    <property type="match status" value="1"/>
</dbReference>
<dbReference type="InterPro" id="IPR038088">
    <property type="entry name" value="DELLA_N_sf"/>
</dbReference>
<dbReference type="InterPro" id="IPR021914">
    <property type="entry name" value="TF_DELLA_N"/>
</dbReference>
<dbReference type="InterPro" id="IPR005202">
    <property type="entry name" value="TF_GRAS"/>
</dbReference>
<dbReference type="PANTHER" id="PTHR31636">
    <property type="entry name" value="OSJNBA0084A10.13 PROTEIN-RELATED"/>
    <property type="match status" value="1"/>
</dbReference>
<dbReference type="Pfam" id="PF12041">
    <property type="entry name" value="DELLA"/>
    <property type="match status" value="1"/>
</dbReference>
<dbReference type="Pfam" id="PF03514">
    <property type="entry name" value="GRAS"/>
    <property type="match status" value="1"/>
</dbReference>
<dbReference type="SMART" id="SM01129">
    <property type="entry name" value="DELLA"/>
    <property type="match status" value="1"/>
</dbReference>
<dbReference type="PROSITE" id="PS50985">
    <property type="entry name" value="GRAS"/>
    <property type="match status" value="1"/>
</dbReference>
<feature type="chain" id="PRO_0000450052" description="DELLA protein 1">
    <location>
        <begin position="1"/>
        <end position="594"/>
    </location>
</feature>
<feature type="domain" description="GRAS" evidence="2">
    <location>
        <begin position="207"/>
        <end position="587"/>
    </location>
</feature>
<feature type="region of interest" description="Disordered" evidence="3">
    <location>
        <begin position="1"/>
        <end position="36"/>
    </location>
</feature>
<feature type="region of interest" description="Leucine repeat I (LRI)" evidence="2">
    <location>
        <begin position="214"/>
        <end position="268"/>
    </location>
</feature>
<feature type="region of interest" description="Required for possible homodimerization" evidence="1">
    <location>
        <begin position="216"/>
        <end position="253"/>
    </location>
</feature>
<feature type="region of interest" description="VHIID" evidence="2">
    <location>
        <begin position="285"/>
        <end position="350"/>
    </location>
</feature>
<feature type="region of interest" description="Leucine repeat II (LRII)" evidence="2">
    <location>
        <begin position="364"/>
        <end position="396"/>
    </location>
</feature>
<feature type="region of interest" description="PFYRE" evidence="2">
    <location>
        <begin position="406"/>
        <end position="508"/>
    </location>
</feature>
<feature type="region of interest" description="SAW" evidence="2">
    <location>
        <begin position="511"/>
        <end position="587"/>
    </location>
</feature>
<feature type="short sequence motif" description="DELLA motif" evidence="8">
    <location>
        <begin position="61"/>
        <end position="65"/>
    </location>
</feature>
<feature type="short sequence motif" description="LxCxE motif; degenerate" evidence="2">
    <location>
        <begin position="221"/>
        <end position="225"/>
    </location>
</feature>
<feature type="short sequence motif" description="VHIID" evidence="2">
    <location>
        <begin position="316"/>
        <end position="320"/>
    </location>
</feature>
<feature type="short sequence motif" description="LXXLL motif; degenerate" evidence="2">
    <location>
        <begin position="414"/>
        <end position="418"/>
    </location>
</feature>
<feature type="compositionally biased region" description="Low complexity" evidence="3">
    <location>
        <begin position="15"/>
        <end position="30"/>
    </location>
</feature>
<feature type="mutagenesis site" description="In della1-delta18; constitutive insensitivity to gibberellic acid (GA) and promotion of arbuscule formation in the inner cortical cells during arbuscular mycorrhizal (AM) symbiosis with AM fungi (e.g. Glomus versiforme)." evidence="4 5">
    <location>
        <begin position="60"/>
        <end position="77"/>
    </location>
</feature>
<gene>
    <name evidence="6 7" type="primary">DELLA1</name>
    <name evidence="9" type="ordered locus">MTR_3g065980</name>
    <name evidence="10" type="ORF">MtrunA17_Chr3g0110971</name>
</gene>
<proteinExistence type="evidence at protein level"/>
<sequence length="594" mass="65226">MKREHQESFGGGVISNNNKTNTNHLNSSKNINFGECSSMQNTNTKQNMWREEKETNGGGMDELLAALGYKVRSSDMADVAQKLEQLEMVMGSAQEEGINHLSSDTVHYDPTDLYSWVQTMLTELNPDSSQINDPLASLGSSSEILNNTFNDDSEYDLSAIPGMAAYPPQEENTAAKRMKTWSEPESEPAVVMSPPPAVENTRPVVLVDTQETGVRLVHTLMACAEAIQQKNLKLAEALVKHISLLASLQTGAMRKVASYFAQALARRIYGNPEETIDSSFSEILHMHFYESSPYLKFAHFTANQAILEAFAGAGRVHVIDFGLKQGMQWPALMQALALRPGGPPTFRLTGIGPPQADNTDALQQVGWKLAQLAQTIGVQFEFRGFVCNSIADLDPNMLEIRPGEAVAVNSVFELHTMLARPGSVEKVLNTVKKINPKIVTIVEQEANHNGPVFVDRFTEALHYYSSLFDSLEGSNSSSNNSNSNSTGLGSPSQDLLMSEIYLGKQICNVVAYEGVDRVERHETLTQWRSRMGSAGFEPVHLGSNAFKQASTLLALFAGGDGYRVEENNGCLMLGWHTRSLIATSAWKLPQNESK</sequence>
<name>DELA1_MEDTR</name>
<keyword id="KW-0939">Gibberellin signaling pathway</keyword>
<keyword id="KW-0539">Nucleus</keyword>
<keyword id="KW-1185">Reference proteome</keyword>
<keyword id="KW-0804">Transcription</keyword>
<keyword id="KW-0805">Transcription regulation</keyword>
<keyword id="KW-0832">Ubl conjugation</keyword>
<comment type="function">
    <text evidence="1 4 5">Probable transcriptional regulator that acts as a repressor of the gibberellin (GA) signaling pathway (By similarity). Probably acts by participating in large multiprotein complexes that repress transcription of GA-inducible genes (By similarity). Upon GA application, it is degraded by the proteasome, allowing the GA signaling pathway (By similarity). Together with DELLA2, required to enable arbuscule development during arbuscular mycorrhizal (AM) symbiosis with AM fungi (e.g. Glomus versiforme) via the regulation of RAM1 which, in turn, regulates various AM genes (e.g. NSP1, NSP2, PT4, LEC5, RAM2, EXO70I, STR and RAD1) (PubMed:24297892, PubMed:26511916).</text>
</comment>
<comment type="subunit">
    <text evidence="1">May be a homodimer.</text>
</comment>
<comment type="subcellular location">
    <subcellularLocation>
        <location evidence="4">Nucleus</location>
    </subcellularLocation>
</comment>
<comment type="tissue specificity">
    <text evidence="5">Strongly expressed in the vascular tissue and endodermis but barely in the inner cortical cells where arbuscule are formed during arbuscular mycorrhizal (AM) symbiosis.</text>
</comment>
<comment type="induction">
    <text evidence="4">Accumulates upon phosphate (Pi) deprivation (PubMed:24297892). Expressed during arbuscular mycorrhizal (AM) symbiosis with AM fungi (e.g. Glomus versiforme) (PubMed:24297892).</text>
</comment>
<comment type="domain">
    <text evidence="1">The DELLA motif is required for its GA-induced degradation.</text>
</comment>
<comment type="PTM">
    <text evidence="1">Ubiquitinated. Upon GA application it is ubiquitinated, leading to its subsequent degradation.</text>
</comment>
<comment type="disruption phenotype">
    <text evidence="4">The double mutant della1/della2 exhibit slender shoots, early flowering and reduced root fresh weight (PubMed:24297892). Impaired arbuscule formation during arbuscular mycorrhizal (AM) symbiosis with AM fungi (e.g. Glomus versiforme) in plant missing both DELLA1 and DELLA2 associated with a reduced expression of AM genes (e.g. NSP1, NSP2, PT4 and LEC5); these phenotypes are phenocopied by treatment with gibberellic acid (GA) (PubMed:24297892).</text>
</comment>
<comment type="similarity">
    <text evidence="8">Belongs to the GRAS family. DELLA subfamily.</text>
</comment>
<comment type="sequence caution" evidence="8">
    <conflict type="erroneous initiation">
        <sequence resource="EMBL-CDS" id="KEH34625"/>
    </conflict>
    <text>Truncated N-terminus.</text>
</comment>
<protein>
    <recommendedName>
        <fullName evidence="6 7">DELLA protein 1</fullName>
        <shortName evidence="6">MtDELLA1</shortName>
    </recommendedName>
</protein>
<accession>A0A396IUP1</accession>
<accession>A0A072V8V6</accession>
<reference key="1">
    <citation type="journal article" date="2011" name="Nature">
        <title>The Medicago genome provides insight into the evolution of rhizobial symbioses.</title>
        <authorList>
            <person name="Young N.D."/>
            <person name="Debelle F."/>
            <person name="Oldroyd G.E.D."/>
            <person name="Geurts R."/>
            <person name="Cannon S.B."/>
            <person name="Udvardi M.K."/>
            <person name="Benedito V.A."/>
            <person name="Mayer K.F.X."/>
            <person name="Gouzy J."/>
            <person name="Schoof H."/>
            <person name="Van de Peer Y."/>
            <person name="Proost S."/>
            <person name="Cook D.R."/>
            <person name="Meyers B.C."/>
            <person name="Spannagl M."/>
            <person name="Cheung F."/>
            <person name="De Mita S."/>
            <person name="Krishnakumar V."/>
            <person name="Gundlach H."/>
            <person name="Zhou S."/>
            <person name="Mudge J."/>
            <person name="Bharti A.K."/>
            <person name="Murray J.D."/>
            <person name="Naoumkina M.A."/>
            <person name="Rosen B."/>
            <person name="Silverstein K.A.T."/>
            <person name="Tang H."/>
            <person name="Rombauts S."/>
            <person name="Zhao P.X."/>
            <person name="Zhou P."/>
            <person name="Barbe V."/>
            <person name="Bardou P."/>
            <person name="Bechner M."/>
            <person name="Bellec A."/>
            <person name="Berger A."/>
            <person name="Berges H."/>
            <person name="Bidwell S."/>
            <person name="Bisseling T."/>
            <person name="Choisne N."/>
            <person name="Couloux A."/>
            <person name="Denny R."/>
            <person name="Deshpande S."/>
            <person name="Dai X."/>
            <person name="Doyle J.J."/>
            <person name="Dudez A.-M."/>
            <person name="Farmer A.D."/>
            <person name="Fouteau S."/>
            <person name="Franken C."/>
            <person name="Gibelin C."/>
            <person name="Gish J."/>
            <person name="Goldstein S."/>
            <person name="Gonzalez A.J."/>
            <person name="Green P.J."/>
            <person name="Hallab A."/>
            <person name="Hartog M."/>
            <person name="Hua A."/>
            <person name="Humphray S.J."/>
            <person name="Jeong D.-H."/>
            <person name="Jing Y."/>
            <person name="Jocker A."/>
            <person name="Kenton S.M."/>
            <person name="Kim D.-J."/>
            <person name="Klee K."/>
            <person name="Lai H."/>
            <person name="Lang C."/>
            <person name="Lin S."/>
            <person name="Macmil S.L."/>
            <person name="Magdelenat G."/>
            <person name="Matthews L."/>
            <person name="McCorrison J."/>
            <person name="Monaghan E.L."/>
            <person name="Mun J.-H."/>
            <person name="Najar F.Z."/>
            <person name="Nicholson C."/>
            <person name="Noirot C."/>
            <person name="O'Bleness M."/>
            <person name="Paule C.R."/>
            <person name="Poulain J."/>
            <person name="Prion F."/>
            <person name="Qin B."/>
            <person name="Qu C."/>
            <person name="Retzel E.F."/>
            <person name="Riddle C."/>
            <person name="Sallet E."/>
            <person name="Samain S."/>
            <person name="Samson N."/>
            <person name="Sanders I."/>
            <person name="Saurat O."/>
            <person name="Scarpelli C."/>
            <person name="Schiex T."/>
            <person name="Segurens B."/>
            <person name="Severin A.J."/>
            <person name="Sherrier D.J."/>
            <person name="Shi R."/>
            <person name="Sims S."/>
            <person name="Singer S.R."/>
            <person name="Sinharoy S."/>
            <person name="Sterck L."/>
            <person name="Viollet A."/>
            <person name="Wang B.-B."/>
            <person name="Wang K."/>
            <person name="Wang M."/>
            <person name="Wang X."/>
            <person name="Warfsmann J."/>
            <person name="Weissenbach J."/>
            <person name="White D.D."/>
            <person name="White J.D."/>
            <person name="Wiley G.B."/>
            <person name="Wincker P."/>
            <person name="Xing Y."/>
            <person name="Yang L."/>
            <person name="Yao Z."/>
            <person name="Ying F."/>
            <person name="Zhai J."/>
            <person name="Zhou L."/>
            <person name="Zuber A."/>
            <person name="Denarie J."/>
            <person name="Dixon R.A."/>
            <person name="May G.D."/>
            <person name="Schwartz D.C."/>
            <person name="Rogers J."/>
            <person name="Quetier F."/>
            <person name="Town C.D."/>
            <person name="Roe B.A."/>
        </authorList>
    </citation>
    <scope>NUCLEOTIDE SEQUENCE [LARGE SCALE GENOMIC DNA]</scope>
    <source>
        <strain>cv. Jemalong A17</strain>
    </source>
</reference>
<reference key="2">
    <citation type="journal article" date="2014" name="BMC Genomics">
        <title>An improved genome release (version Mt4.0) for the model legume Medicago truncatula.</title>
        <authorList>
            <person name="Tang H."/>
            <person name="Krishnakumar V."/>
            <person name="Bidwell S."/>
            <person name="Rosen B."/>
            <person name="Chan A."/>
            <person name="Zhou S."/>
            <person name="Gentzbittel L."/>
            <person name="Childs K.L."/>
            <person name="Yandell M."/>
            <person name="Gundlach H."/>
            <person name="Mayer K.F."/>
            <person name="Schwartz D.C."/>
            <person name="Town C.D."/>
        </authorList>
    </citation>
    <scope>GENOME REANNOTATION</scope>
    <source>
        <strain>cv. Jemalong A17</strain>
    </source>
</reference>
<reference key="3">
    <citation type="journal article" date="2018" name="Nat. Plants">
        <title>Whole-genome landscape of Medicago truncatula symbiotic genes.</title>
        <authorList>
            <person name="Pecrix Y."/>
            <person name="Staton S.E."/>
            <person name="Sallet E."/>
            <person name="Lelandais-Briere C."/>
            <person name="Moreau S."/>
            <person name="Carrere S."/>
            <person name="Blein T."/>
            <person name="Jardinaud M.F."/>
            <person name="Latrasse D."/>
            <person name="Zouine M."/>
            <person name="Zahm M."/>
            <person name="Kreplak J."/>
            <person name="Mayjonade B."/>
            <person name="Satge C."/>
            <person name="Perez M."/>
            <person name="Cauet S."/>
            <person name="Marande W."/>
            <person name="Chantry-Darmon C."/>
            <person name="Lopez-Roques C."/>
            <person name="Bouchez O."/>
            <person name="Berard A."/>
            <person name="Debelle F."/>
            <person name="Munos S."/>
            <person name="Bendahmane A."/>
            <person name="Berges H."/>
            <person name="Niebel A."/>
            <person name="Buitink J."/>
            <person name="Frugier F."/>
            <person name="Benhamed M."/>
            <person name="Crespi M."/>
            <person name="Gouzy J."/>
            <person name="Gamas P."/>
        </authorList>
    </citation>
    <scope>NUCLEOTIDE SEQUENCE [LARGE SCALE GENOMIC DNA]</scope>
    <source>
        <strain>cv. Jemalong A17</strain>
    </source>
</reference>
<reference key="4">
    <citation type="journal article" date="2013" name="Proc. Natl. Acad. Sci. U.S.A.">
        <title>DELLA proteins regulate arbuscule formation in arbuscular mycorrhizal symbiosis.</title>
        <authorList>
            <person name="Floss D.S."/>
            <person name="Levy J.G."/>
            <person name="Levesque-Tremblay V."/>
            <person name="Pumplin N."/>
            <person name="Harrison M.J."/>
        </authorList>
    </citation>
    <scope>FUNCTION</scope>
    <scope>DISRUPTION PHENOTYPE</scope>
    <scope>MUTAGENESIS OF 60-MET--ALA-77</scope>
    <scope>INDUCTION BY PHOSPHATE DEPRIVATION AND GLOMUS VERSIFORME</scope>
    <scope>TISSUE SPECIFICITY</scope>
    <scope>SUBCELLULAR LOCATION</scope>
</reference>
<reference key="5">
    <citation type="journal article" date="2015" name="Plant Physiol.">
        <title>Hyphal branching during arbuscule development requires reduced arbuscular mycorrhiza1.</title>
        <authorList>
            <person name="Park H.-J."/>
            <person name="Floss D.S."/>
            <person name="Levesque-Tremblay V."/>
            <person name="Bravo A."/>
            <person name="Harrison M.J."/>
        </authorList>
    </citation>
    <scope>FUNCTION</scope>
</reference>
<organism>
    <name type="scientific">Medicago truncatula</name>
    <name type="common">Barrel medic</name>
    <name type="synonym">Medicago tribuloides</name>
    <dbReference type="NCBI Taxonomy" id="3880"/>
    <lineage>
        <taxon>Eukaryota</taxon>
        <taxon>Viridiplantae</taxon>
        <taxon>Streptophyta</taxon>
        <taxon>Embryophyta</taxon>
        <taxon>Tracheophyta</taxon>
        <taxon>Spermatophyta</taxon>
        <taxon>Magnoliopsida</taxon>
        <taxon>eudicotyledons</taxon>
        <taxon>Gunneridae</taxon>
        <taxon>Pentapetalae</taxon>
        <taxon>rosids</taxon>
        <taxon>fabids</taxon>
        <taxon>Fabales</taxon>
        <taxon>Fabaceae</taxon>
        <taxon>Papilionoideae</taxon>
        <taxon>50 kb inversion clade</taxon>
        <taxon>NPAAA clade</taxon>
        <taxon>Hologalegina</taxon>
        <taxon>IRL clade</taxon>
        <taxon>Trifolieae</taxon>
        <taxon>Medicago</taxon>
    </lineage>
</organism>
<evidence type="ECO:0000250" key="1">
    <source>
        <dbReference type="UniProtKB" id="Q7G7J6"/>
    </source>
</evidence>
<evidence type="ECO:0000255" key="2">
    <source>
        <dbReference type="PROSITE-ProRule" id="PRU01191"/>
    </source>
</evidence>
<evidence type="ECO:0000256" key="3">
    <source>
        <dbReference type="SAM" id="MobiDB-lite"/>
    </source>
</evidence>
<evidence type="ECO:0000269" key="4">
    <source>
    </source>
</evidence>
<evidence type="ECO:0000269" key="5">
    <source>
    </source>
</evidence>
<evidence type="ECO:0000303" key="6">
    <source>
    </source>
</evidence>
<evidence type="ECO:0000303" key="7">
    <source>
    </source>
</evidence>
<evidence type="ECO:0000305" key="8"/>
<evidence type="ECO:0000312" key="9">
    <source>
        <dbReference type="EMBL" id="KEH34625.1"/>
    </source>
</evidence>
<evidence type="ECO:0000312" key="10">
    <source>
        <dbReference type="EMBL" id="RHN68173.1"/>
    </source>
</evidence>